<protein>
    <recommendedName>
        <fullName evidence="1">Imidazole glycerol phosphate synthase subunit HisH</fullName>
        <ecNumber evidence="1">4.3.2.10</ecNumber>
    </recommendedName>
    <alternativeName>
        <fullName evidence="1">IGP synthase glutaminase subunit</fullName>
        <ecNumber evidence="1">3.5.1.2</ecNumber>
    </alternativeName>
    <alternativeName>
        <fullName evidence="1">IGP synthase subunit HisH</fullName>
    </alternativeName>
    <alternativeName>
        <fullName evidence="1">ImGP synthase subunit HisH</fullName>
        <shortName evidence="1">IGPS subunit HisH</shortName>
    </alternativeName>
</protein>
<comment type="function">
    <text evidence="1">IGPS catalyzes the conversion of PRFAR and glutamine to IGP, AICAR and glutamate. The HisH subunit catalyzes the hydrolysis of glutamine to glutamate and ammonia as part of the synthesis of IGP and AICAR. The resulting ammonia molecule is channeled to the active site of HisF.</text>
</comment>
<comment type="catalytic activity">
    <reaction evidence="1">
        <text>5-[(5-phospho-1-deoxy-D-ribulos-1-ylimino)methylamino]-1-(5-phospho-beta-D-ribosyl)imidazole-4-carboxamide + L-glutamine = D-erythro-1-(imidazol-4-yl)glycerol 3-phosphate + 5-amino-1-(5-phospho-beta-D-ribosyl)imidazole-4-carboxamide + L-glutamate + H(+)</text>
        <dbReference type="Rhea" id="RHEA:24793"/>
        <dbReference type="ChEBI" id="CHEBI:15378"/>
        <dbReference type="ChEBI" id="CHEBI:29985"/>
        <dbReference type="ChEBI" id="CHEBI:58278"/>
        <dbReference type="ChEBI" id="CHEBI:58359"/>
        <dbReference type="ChEBI" id="CHEBI:58475"/>
        <dbReference type="ChEBI" id="CHEBI:58525"/>
        <dbReference type="EC" id="4.3.2.10"/>
    </reaction>
</comment>
<comment type="catalytic activity">
    <reaction evidence="1">
        <text>L-glutamine + H2O = L-glutamate + NH4(+)</text>
        <dbReference type="Rhea" id="RHEA:15889"/>
        <dbReference type="ChEBI" id="CHEBI:15377"/>
        <dbReference type="ChEBI" id="CHEBI:28938"/>
        <dbReference type="ChEBI" id="CHEBI:29985"/>
        <dbReference type="ChEBI" id="CHEBI:58359"/>
        <dbReference type="EC" id="3.5.1.2"/>
    </reaction>
</comment>
<comment type="pathway">
    <text evidence="1">Amino-acid biosynthesis; L-histidine biosynthesis; L-histidine from 5-phospho-alpha-D-ribose 1-diphosphate: step 5/9.</text>
</comment>
<comment type="subunit">
    <text evidence="1">Heterodimer of HisH and HisF.</text>
</comment>
<comment type="subcellular location">
    <subcellularLocation>
        <location evidence="1">Cytoplasm</location>
    </subcellularLocation>
</comment>
<organism>
    <name type="scientific">Bacillus cereus (strain Q1)</name>
    <dbReference type="NCBI Taxonomy" id="361100"/>
    <lineage>
        <taxon>Bacteria</taxon>
        <taxon>Bacillati</taxon>
        <taxon>Bacillota</taxon>
        <taxon>Bacilli</taxon>
        <taxon>Bacillales</taxon>
        <taxon>Bacillaceae</taxon>
        <taxon>Bacillus</taxon>
        <taxon>Bacillus cereus group</taxon>
    </lineage>
</organism>
<name>HIS5_BACCQ</name>
<evidence type="ECO:0000255" key="1">
    <source>
        <dbReference type="HAMAP-Rule" id="MF_00278"/>
    </source>
</evidence>
<sequence>MIAIIDYGMGNIRSVEQALKHIGAAYIVTSDKEEIFRSDGVILPGVGAFPKAMDVLEEKDLVRVLQEIGRSRKPLLGICLGMQLLFEKSEELQDCNGLSLLPGVIRKLKVPYKIPHMGWNELKKEGEIALWNGVEDGSFVYYVHSYYADCPNEIVYGISEYGVKVPGFVAKGNIYGAQFHPEKSGDIGMQMLKNFKGVVETWKSSQLSI</sequence>
<feature type="chain" id="PRO_1000132535" description="Imidazole glycerol phosphate synthase subunit HisH">
    <location>
        <begin position="1"/>
        <end position="209"/>
    </location>
</feature>
<feature type="domain" description="Glutamine amidotransferase type-1" evidence="1">
    <location>
        <begin position="1"/>
        <end position="205"/>
    </location>
</feature>
<feature type="active site" description="Nucleophile" evidence="1">
    <location>
        <position position="79"/>
    </location>
</feature>
<feature type="active site" evidence="1">
    <location>
        <position position="180"/>
    </location>
</feature>
<feature type="active site" evidence="1">
    <location>
        <position position="182"/>
    </location>
</feature>
<reference key="1">
    <citation type="journal article" date="2009" name="J. Bacteriol.">
        <title>Complete genome sequence of the extremophilic Bacillus cereus strain Q1 with industrial applications.</title>
        <authorList>
            <person name="Xiong Z."/>
            <person name="Jiang Y."/>
            <person name="Qi D."/>
            <person name="Lu H."/>
            <person name="Yang F."/>
            <person name="Yang J."/>
            <person name="Chen L."/>
            <person name="Sun L."/>
            <person name="Xu X."/>
            <person name="Xue Y."/>
            <person name="Zhu Y."/>
            <person name="Jin Q."/>
        </authorList>
    </citation>
    <scope>NUCLEOTIDE SEQUENCE [LARGE SCALE GENOMIC DNA]</scope>
    <source>
        <strain>Q1</strain>
    </source>
</reference>
<gene>
    <name evidence="1" type="primary">hisH</name>
    <name type="ordered locus">BCQ_1481</name>
</gene>
<proteinExistence type="inferred from homology"/>
<keyword id="KW-0028">Amino-acid biosynthesis</keyword>
<keyword id="KW-0963">Cytoplasm</keyword>
<keyword id="KW-0315">Glutamine amidotransferase</keyword>
<keyword id="KW-0368">Histidine biosynthesis</keyword>
<keyword id="KW-0378">Hydrolase</keyword>
<keyword id="KW-0456">Lyase</keyword>
<accession>B9IUZ8</accession>
<dbReference type="EC" id="4.3.2.10" evidence="1"/>
<dbReference type="EC" id="3.5.1.2" evidence="1"/>
<dbReference type="EMBL" id="CP000227">
    <property type="protein sequence ID" value="ACM11909.1"/>
    <property type="molecule type" value="Genomic_DNA"/>
</dbReference>
<dbReference type="SMR" id="B9IUZ8"/>
<dbReference type="MEROPS" id="C26.965"/>
<dbReference type="KEGG" id="bcq:BCQ_1481"/>
<dbReference type="HOGENOM" id="CLU_071837_2_2_9"/>
<dbReference type="UniPathway" id="UPA00031">
    <property type="reaction ID" value="UER00010"/>
</dbReference>
<dbReference type="Proteomes" id="UP000000441">
    <property type="component" value="Chromosome"/>
</dbReference>
<dbReference type="GO" id="GO:0005737">
    <property type="term" value="C:cytoplasm"/>
    <property type="evidence" value="ECO:0007669"/>
    <property type="project" value="UniProtKB-SubCell"/>
</dbReference>
<dbReference type="GO" id="GO:0004359">
    <property type="term" value="F:glutaminase activity"/>
    <property type="evidence" value="ECO:0007669"/>
    <property type="project" value="UniProtKB-EC"/>
</dbReference>
<dbReference type="GO" id="GO:0000107">
    <property type="term" value="F:imidazoleglycerol-phosphate synthase activity"/>
    <property type="evidence" value="ECO:0007669"/>
    <property type="project" value="UniProtKB-UniRule"/>
</dbReference>
<dbReference type="GO" id="GO:0016829">
    <property type="term" value="F:lyase activity"/>
    <property type="evidence" value="ECO:0007669"/>
    <property type="project" value="UniProtKB-KW"/>
</dbReference>
<dbReference type="GO" id="GO:0000105">
    <property type="term" value="P:L-histidine biosynthetic process"/>
    <property type="evidence" value="ECO:0007669"/>
    <property type="project" value="UniProtKB-UniRule"/>
</dbReference>
<dbReference type="CDD" id="cd01748">
    <property type="entry name" value="GATase1_IGP_Synthase"/>
    <property type="match status" value="1"/>
</dbReference>
<dbReference type="FunFam" id="3.40.50.880:FF:000028">
    <property type="entry name" value="Imidazole glycerol phosphate synthase subunit HisH"/>
    <property type="match status" value="1"/>
</dbReference>
<dbReference type="Gene3D" id="3.40.50.880">
    <property type="match status" value="1"/>
</dbReference>
<dbReference type="HAMAP" id="MF_00278">
    <property type="entry name" value="HisH"/>
    <property type="match status" value="1"/>
</dbReference>
<dbReference type="InterPro" id="IPR029062">
    <property type="entry name" value="Class_I_gatase-like"/>
</dbReference>
<dbReference type="InterPro" id="IPR017926">
    <property type="entry name" value="GATASE"/>
</dbReference>
<dbReference type="InterPro" id="IPR010139">
    <property type="entry name" value="Imidazole-glycPsynth_HisH"/>
</dbReference>
<dbReference type="NCBIfam" id="TIGR01855">
    <property type="entry name" value="IMP_synth_hisH"/>
    <property type="match status" value="1"/>
</dbReference>
<dbReference type="PANTHER" id="PTHR42701">
    <property type="entry name" value="IMIDAZOLE GLYCEROL PHOSPHATE SYNTHASE SUBUNIT HISH"/>
    <property type="match status" value="1"/>
</dbReference>
<dbReference type="PANTHER" id="PTHR42701:SF1">
    <property type="entry name" value="IMIDAZOLE GLYCEROL PHOSPHATE SYNTHASE SUBUNIT HISH"/>
    <property type="match status" value="1"/>
</dbReference>
<dbReference type="Pfam" id="PF00117">
    <property type="entry name" value="GATase"/>
    <property type="match status" value="1"/>
</dbReference>
<dbReference type="PIRSF" id="PIRSF000495">
    <property type="entry name" value="Amidotransf_hisH"/>
    <property type="match status" value="1"/>
</dbReference>
<dbReference type="SUPFAM" id="SSF52317">
    <property type="entry name" value="Class I glutamine amidotransferase-like"/>
    <property type="match status" value="1"/>
</dbReference>
<dbReference type="PROSITE" id="PS51273">
    <property type="entry name" value="GATASE_TYPE_1"/>
    <property type="match status" value="1"/>
</dbReference>